<sequence length="138" mass="14955">MAKLLPRIGSRKNGRISSRKNARKIPKGVIHVQASFNNTIVTVTDVRGRVISWSSAGACGFRGTRRGTPFAAQTAAGNAIRTVVDQGMQRAEVMIKGPGLGRDAALRAIRRSGILLSFVRDVTPMPHNGCRPPKKRRV</sequence>
<geneLocation type="chloroplast"/>
<name>RR11_POPTR</name>
<comment type="subunit">
    <text evidence="1">Part of the 30S ribosomal subunit.</text>
</comment>
<comment type="subcellular location">
    <subcellularLocation>
        <location>Plastid</location>
        <location>Chloroplast</location>
    </subcellularLocation>
</comment>
<comment type="similarity">
    <text evidence="1">Belongs to the universal ribosomal protein uS11 family.</text>
</comment>
<dbReference type="EMBL" id="EF489041">
    <property type="protein sequence ID" value="ABO36739.1"/>
    <property type="molecule type" value="Genomic_DNA"/>
</dbReference>
<dbReference type="RefSeq" id="YP_001109535.1">
    <property type="nucleotide sequence ID" value="NC_009143.1"/>
</dbReference>
<dbReference type="SMR" id="A4GYU4"/>
<dbReference type="FunCoup" id="A4GYU4">
    <property type="interactions" value="1714"/>
</dbReference>
<dbReference type="STRING" id="3694.A4GYU4"/>
<dbReference type="GeneID" id="4929706"/>
<dbReference type="KEGG" id="pop:4929706"/>
<dbReference type="InParanoid" id="A4GYU4"/>
<dbReference type="OrthoDB" id="826998at2759"/>
<dbReference type="Proteomes" id="UP000006729">
    <property type="component" value="Chloroplast"/>
</dbReference>
<dbReference type="GO" id="GO:0009507">
    <property type="term" value="C:chloroplast"/>
    <property type="evidence" value="ECO:0007669"/>
    <property type="project" value="UniProtKB-SubCell"/>
</dbReference>
<dbReference type="GO" id="GO:1990904">
    <property type="term" value="C:ribonucleoprotein complex"/>
    <property type="evidence" value="ECO:0007669"/>
    <property type="project" value="UniProtKB-KW"/>
</dbReference>
<dbReference type="GO" id="GO:0005840">
    <property type="term" value="C:ribosome"/>
    <property type="evidence" value="ECO:0007669"/>
    <property type="project" value="UniProtKB-KW"/>
</dbReference>
<dbReference type="GO" id="GO:0019843">
    <property type="term" value="F:rRNA binding"/>
    <property type="evidence" value="ECO:0007669"/>
    <property type="project" value="UniProtKB-UniRule"/>
</dbReference>
<dbReference type="GO" id="GO:0003735">
    <property type="term" value="F:structural constituent of ribosome"/>
    <property type="evidence" value="ECO:0000318"/>
    <property type="project" value="GO_Central"/>
</dbReference>
<dbReference type="GO" id="GO:0006412">
    <property type="term" value="P:translation"/>
    <property type="evidence" value="ECO:0000318"/>
    <property type="project" value="GO_Central"/>
</dbReference>
<dbReference type="FunFam" id="3.30.420.80:FF:000003">
    <property type="entry name" value="30S ribosomal protein S11, chloroplastic"/>
    <property type="match status" value="1"/>
</dbReference>
<dbReference type="Gene3D" id="3.30.420.80">
    <property type="entry name" value="Ribosomal protein S11"/>
    <property type="match status" value="1"/>
</dbReference>
<dbReference type="HAMAP" id="MF_01310">
    <property type="entry name" value="Ribosomal_uS11"/>
    <property type="match status" value="1"/>
</dbReference>
<dbReference type="InterPro" id="IPR001971">
    <property type="entry name" value="Ribosomal_uS11"/>
</dbReference>
<dbReference type="InterPro" id="IPR019981">
    <property type="entry name" value="Ribosomal_uS11_bac-type"/>
</dbReference>
<dbReference type="InterPro" id="IPR018102">
    <property type="entry name" value="Ribosomal_uS11_CS"/>
</dbReference>
<dbReference type="InterPro" id="IPR036967">
    <property type="entry name" value="Ribosomal_uS11_sf"/>
</dbReference>
<dbReference type="NCBIfam" id="NF003698">
    <property type="entry name" value="PRK05309.1"/>
    <property type="match status" value="1"/>
</dbReference>
<dbReference type="NCBIfam" id="TIGR03632">
    <property type="entry name" value="uS11_bact"/>
    <property type="match status" value="1"/>
</dbReference>
<dbReference type="PANTHER" id="PTHR11759">
    <property type="entry name" value="40S RIBOSOMAL PROTEIN S14/30S RIBOSOMAL PROTEIN S11"/>
    <property type="match status" value="1"/>
</dbReference>
<dbReference type="Pfam" id="PF00411">
    <property type="entry name" value="Ribosomal_S11"/>
    <property type="match status" value="1"/>
</dbReference>
<dbReference type="PIRSF" id="PIRSF002131">
    <property type="entry name" value="Ribosomal_S11"/>
    <property type="match status" value="1"/>
</dbReference>
<dbReference type="SUPFAM" id="SSF53137">
    <property type="entry name" value="Translational machinery components"/>
    <property type="match status" value="1"/>
</dbReference>
<dbReference type="PROSITE" id="PS00054">
    <property type="entry name" value="RIBOSOMAL_S11"/>
    <property type="match status" value="1"/>
</dbReference>
<accession>A4GYU4</accession>
<protein>
    <recommendedName>
        <fullName evidence="1">Small ribosomal subunit protein uS11c</fullName>
    </recommendedName>
    <alternativeName>
        <fullName evidence="3">30S ribosomal protein S11, chloroplastic</fullName>
    </alternativeName>
</protein>
<proteinExistence type="inferred from homology"/>
<feature type="chain" id="PRO_0000294926" description="Small ribosomal subunit protein uS11c">
    <location>
        <begin position="1"/>
        <end position="138"/>
    </location>
</feature>
<feature type="region of interest" description="Disordered" evidence="2">
    <location>
        <begin position="1"/>
        <end position="22"/>
    </location>
</feature>
<feature type="compositionally biased region" description="Basic residues" evidence="2">
    <location>
        <begin position="9"/>
        <end position="22"/>
    </location>
</feature>
<gene>
    <name evidence="1" type="primary">rps11</name>
    <name type="ordered locus">Poptr_cp056</name>
</gene>
<keyword id="KW-0150">Chloroplast</keyword>
<keyword id="KW-0934">Plastid</keyword>
<keyword id="KW-1185">Reference proteome</keyword>
<keyword id="KW-0687">Ribonucleoprotein</keyword>
<keyword id="KW-0689">Ribosomal protein</keyword>
<keyword id="KW-0694">RNA-binding</keyword>
<keyword id="KW-0699">rRNA-binding</keyword>
<reference key="1">
    <citation type="journal article" date="2006" name="Science">
        <title>The genome of black cottonwood, Populus trichocarpa (Torr. &amp; Gray).</title>
        <authorList>
            <person name="Tuskan G.A."/>
            <person name="Difazio S."/>
            <person name="Jansson S."/>
            <person name="Bohlmann J."/>
            <person name="Grigoriev I."/>
            <person name="Hellsten U."/>
            <person name="Putnam N."/>
            <person name="Ralph S."/>
            <person name="Rombauts S."/>
            <person name="Salamov A."/>
            <person name="Schein J."/>
            <person name="Sterck L."/>
            <person name="Aerts A."/>
            <person name="Bhalerao R.R."/>
            <person name="Bhalerao R.P."/>
            <person name="Blaudez D."/>
            <person name="Boerjan W."/>
            <person name="Brun A."/>
            <person name="Brunner A."/>
            <person name="Busov V."/>
            <person name="Campbell M."/>
            <person name="Carlson J."/>
            <person name="Chalot M."/>
            <person name="Chapman J."/>
            <person name="Chen G.-L."/>
            <person name="Cooper D."/>
            <person name="Coutinho P.M."/>
            <person name="Couturier J."/>
            <person name="Covert S."/>
            <person name="Cronk Q."/>
            <person name="Cunningham R."/>
            <person name="Davis J."/>
            <person name="Degroeve S."/>
            <person name="Dejardin A."/>
            <person name="dePamphilis C.W."/>
            <person name="Detter J."/>
            <person name="Dirks B."/>
            <person name="Dubchak I."/>
            <person name="Duplessis S."/>
            <person name="Ehlting J."/>
            <person name="Ellis B."/>
            <person name="Gendler K."/>
            <person name="Goodstein D."/>
            <person name="Gribskov M."/>
            <person name="Grimwood J."/>
            <person name="Groover A."/>
            <person name="Gunter L."/>
            <person name="Hamberger B."/>
            <person name="Heinze B."/>
            <person name="Helariutta Y."/>
            <person name="Henrissat B."/>
            <person name="Holligan D."/>
            <person name="Holt R."/>
            <person name="Huang W."/>
            <person name="Islam-Faridi N."/>
            <person name="Jones S."/>
            <person name="Jones-Rhoades M."/>
            <person name="Jorgensen R."/>
            <person name="Joshi C."/>
            <person name="Kangasjaervi J."/>
            <person name="Karlsson J."/>
            <person name="Kelleher C."/>
            <person name="Kirkpatrick R."/>
            <person name="Kirst M."/>
            <person name="Kohler A."/>
            <person name="Kalluri U."/>
            <person name="Larimer F."/>
            <person name="Leebens-Mack J."/>
            <person name="Leple J.-C."/>
            <person name="Locascio P."/>
            <person name="Lou Y."/>
            <person name="Lucas S."/>
            <person name="Martin F."/>
            <person name="Montanini B."/>
            <person name="Napoli C."/>
            <person name="Nelson D.R."/>
            <person name="Nelson C."/>
            <person name="Nieminen K."/>
            <person name="Nilsson O."/>
            <person name="Pereda V."/>
            <person name="Peter G."/>
            <person name="Philippe R."/>
            <person name="Pilate G."/>
            <person name="Poliakov A."/>
            <person name="Razumovskaya J."/>
            <person name="Richardson P."/>
            <person name="Rinaldi C."/>
            <person name="Ritland K."/>
            <person name="Rouze P."/>
            <person name="Ryaboy D."/>
            <person name="Schmutz J."/>
            <person name="Schrader J."/>
            <person name="Segerman B."/>
            <person name="Shin H."/>
            <person name="Siddiqui A."/>
            <person name="Sterky F."/>
            <person name="Terry A."/>
            <person name="Tsai C.-J."/>
            <person name="Uberbacher E."/>
            <person name="Unneberg P."/>
            <person name="Vahala J."/>
            <person name="Wall K."/>
            <person name="Wessler S."/>
            <person name="Yang G."/>
            <person name="Yin T."/>
            <person name="Douglas C."/>
            <person name="Marra M."/>
            <person name="Sandberg G."/>
            <person name="Van de Peer Y."/>
            <person name="Rokhsar D.S."/>
        </authorList>
    </citation>
    <scope>NUCLEOTIDE SEQUENCE [LARGE SCALE GENOMIC DNA]</scope>
    <source>
        <strain>cv. Nisqually</strain>
    </source>
</reference>
<evidence type="ECO:0000255" key="1">
    <source>
        <dbReference type="HAMAP-Rule" id="MF_01310"/>
    </source>
</evidence>
<evidence type="ECO:0000256" key="2">
    <source>
        <dbReference type="SAM" id="MobiDB-lite"/>
    </source>
</evidence>
<evidence type="ECO:0000305" key="3"/>
<organism>
    <name type="scientific">Populus trichocarpa</name>
    <name type="common">Western balsam poplar</name>
    <name type="synonym">Populus balsamifera subsp. trichocarpa</name>
    <dbReference type="NCBI Taxonomy" id="3694"/>
    <lineage>
        <taxon>Eukaryota</taxon>
        <taxon>Viridiplantae</taxon>
        <taxon>Streptophyta</taxon>
        <taxon>Embryophyta</taxon>
        <taxon>Tracheophyta</taxon>
        <taxon>Spermatophyta</taxon>
        <taxon>Magnoliopsida</taxon>
        <taxon>eudicotyledons</taxon>
        <taxon>Gunneridae</taxon>
        <taxon>Pentapetalae</taxon>
        <taxon>rosids</taxon>
        <taxon>fabids</taxon>
        <taxon>Malpighiales</taxon>
        <taxon>Salicaceae</taxon>
        <taxon>Saliceae</taxon>
        <taxon>Populus</taxon>
    </lineage>
</organism>